<accession>O84288</accession>
<evidence type="ECO:0000255" key="1"/>
<evidence type="ECO:0000255" key="2">
    <source>
        <dbReference type="PROSITE-ProRule" id="PRU00217"/>
    </source>
</evidence>
<evidence type="ECO:0000255" key="3">
    <source>
        <dbReference type="PROSITE-ProRule" id="PRU01251"/>
    </source>
</evidence>
<evidence type="ECO:0000256" key="4">
    <source>
        <dbReference type="SAM" id="MobiDB-lite"/>
    </source>
</evidence>
<evidence type="ECO:0000305" key="5"/>
<proteinExistence type="inferred from homology"/>
<name>CLPC_CHLTR</name>
<gene>
    <name type="primary">clpC</name>
    <name type="ordered locus">CT_286</name>
</gene>
<protein>
    <recommendedName>
        <fullName>Probable ATP-dependent Clp protease ATP-binding subunit</fullName>
    </recommendedName>
</protein>
<sequence length="854" mass="95146">MFEKFTNRAKQVIKLAKKEAQRLNHNYLGTEHILLGLLKLGQGVAVNVLRTLGVDFDTAKHEVERLIGYGPEIQVCGDPALTGRVKKSFESANEEAALLEHNYVGTEHLLLGILNQSDGVALQVLENLHVDPKEIRKEILKELETFNLQLPPSSSITPRNTNSSSSSKSSSPLGGHTLGGDKPEKLSALKAYGYDLTEMFKESRLDPVIGRSAEVERLILILCRRRKNNPVLVGEAGVGKTAIVEGLAQKIVSGEVPEALRKKRLITLDLALMIAGTKYRGQFEERIKAVMDEVRKHGNILLFIDELHTIVGAGAAEGAIDASHILKPALARGEIQCIGATTLDEYRKHIEKDAALERRFQKIVVQPPSVDETVEILRGLKKKYEEHHNVFITDEALVAAAKLSDQYVHGRFLPDKAIDLLDEAGARVRVNTMGQPSDLVRLEAEIEKTKQAKEQAIGTQEYEKAASLRDEEKKLREKLGNMKQQWESNKEEHQVPVDEEAVAQVVSVQTGIPAARLTEAESEKLLTLETTLQKKVIGQSQAVASICRAIRRSRTGIKDPNRPMGSFLFLGPTGVGKTLLAQQIAIEMFGGEDSLIQVDMSEYMEKFAATKMMGSPPGYVGHEEGGHLTEQVRRRPYCVVLFDEIEKAHPDIMDLMLQILEQGRLTDSFGRKIDFRNTIIIMTSNLGADLIRKSGEIGFGLRSHMDYAVIKEKIDAAVKKHLKPEFINRLDESVIFKPLEKEALSEIIHLEINKLGSRLQNYQMDLNIPDSVISFLVTKGHSPEMGARPLRRVVEQYLEDPLAEMLLKESCRQEARKLRARLTEERVVFEREEEAVSALAIEGDGSEPITADES</sequence>
<organism>
    <name type="scientific">Chlamydia trachomatis serovar D (strain ATCC VR-885 / DSM 19411 / UW-3/Cx)</name>
    <dbReference type="NCBI Taxonomy" id="272561"/>
    <lineage>
        <taxon>Bacteria</taxon>
        <taxon>Pseudomonadati</taxon>
        <taxon>Chlamydiota</taxon>
        <taxon>Chlamydiia</taxon>
        <taxon>Chlamydiales</taxon>
        <taxon>Chlamydiaceae</taxon>
        <taxon>Chlamydia/Chlamydophila group</taxon>
        <taxon>Chlamydia</taxon>
    </lineage>
</organism>
<feature type="chain" id="PRO_0000191232" description="Probable ATP-dependent Clp protease ATP-binding subunit">
    <location>
        <begin position="1"/>
        <end position="854"/>
    </location>
</feature>
<feature type="domain" description="Clp R" evidence="3">
    <location>
        <begin position="2"/>
        <end position="145"/>
    </location>
</feature>
<feature type="domain" description="UVR" evidence="2">
    <location>
        <begin position="443"/>
        <end position="478"/>
    </location>
</feature>
<feature type="region of interest" description="Repeat 1" evidence="3">
    <location>
        <begin position="5"/>
        <end position="70"/>
    </location>
</feature>
<feature type="region of interest" description="Repeat 2" evidence="3">
    <location>
        <begin position="81"/>
        <end position="145"/>
    </location>
</feature>
<feature type="region of interest" description="Disordered" evidence="4">
    <location>
        <begin position="151"/>
        <end position="182"/>
    </location>
</feature>
<feature type="compositionally biased region" description="Low complexity" evidence="4">
    <location>
        <begin position="151"/>
        <end position="172"/>
    </location>
</feature>
<feature type="binding site" evidence="1">
    <location>
        <begin position="234"/>
        <end position="241"/>
    </location>
    <ligand>
        <name>ATP</name>
        <dbReference type="ChEBI" id="CHEBI:30616"/>
    </ligand>
</feature>
<feature type="binding site" evidence="1">
    <location>
        <begin position="571"/>
        <end position="578"/>
    </location>
    <ligand>
        <name>ATP</name>
        <dbReference type="ChEBI" id="CHEBI:30616"/>
    </ligand>
</feature>
<reference key="1">
    <citation type="journal article" date="1998" name="Science">
        <title>Genome sequence of an obligate intracellular pathogen of humans: Chlamydia trachomatis.</title>
        <authorList>
            <person name="Stephens R.S."/>
            <person name="Kalman S."/>
            <person name="Lammel C.J."/>
            <person name="Fan J."/>
            <person name="Marathe R."/>
            <person name="Aravind L."/>
            <person name="Mitchell W.P."/>
            <person name="Olinger L."/>
            <person name="Tatusov R.L."/>
            <person name="Zhao Q."/>
            <person name="Koonin E.V."/>
            <person name="Davis R.W."/>
        </authorList>
    </citation>
    <scope>NUCLEOTIDE SEQUENCE [LARGE SCALE GENOMIC DNA]</scope>
    <source>
        <strain>ATCC VR-885 / DSM 19411 / UW-3/Cx</strain>
    </source>
</reference>
<dbReference type="EMBL" id="AE001273">
    <property type="protein sequence ID" value="AAC67879.1"/>
    <property type="molecule type" value="Genomic_DNA"/>
</dbReference>
<dbReference type="PIR" id="C71533">
    <property type="entry name" value="C71533"/>
</dbReference>
<dbReference type="RefSeq" id="NP_219791.1">
    <property type="nucleotide sequence ID" value="NC_000117.1"/>
</dbReference>
<dbReference type="RefSeq" id="WP_010725148.1">
    <property type="nucleotide sequence ID" value="NC_000117.1"/>
</dbReference>
<dbReference type="SMR" id="O84288"/>
<dbReference type="FunCoup" id="O84288">
    <property type="interactions" value="259"/>
</dbReference>
<dbReference type="STRING" id="272561.CT_286"/>
<dbReference type="EnsemblBacteria" id="AAC67879">
    <property type="protein sequence ID" value="AAC67879"/>
    <property type="gene ID" value="CT_286"/>
</dbReference>
<dbReference type="GeneID" id="884839"/>
<dbReference type="KEGG" id="ctr:CT_286"/>
<dbReference type="PATRIC" id="fig|272561.5.peg.306"/>
<dbReference type="HOGENOM" id="CLU_005070_4_1_0"/>
<dbReference type="InParanoid" id="O84288"/>
<dbReference type="OrthoDB" id="9803641at2"/>
<dbReference type="Proteomes" id="UP000000431">
    <property type="component" value="Chromosome"/>
</dbReference>
<dbReference type="GO" id="GO:0005524">
    <property type="term" value="F:ATP binding"/>
    <property type="evidence" value="ECO:0007669"/>
    <property type="project" value="UniProtKB-KW"/>
</dbReference>
<dbReference type="GO" id="GO:0016887">
    <property type="term" value="F:ATP hydrolysis activity"/>
    <property type="evidence" value="ECO:0007669"/>
    <property type="project" value="InterPro"/>
</dbReference>
<dbReference type="CDD" id="cd00009">
    <property type="entry name" value="AAA"/>
    <property type="match status" value="1"/>
</dbReference>
<dbReference type="CDD" id="cd19499">
    <property type="entry name" value="RecA-like_ClpB_Hsp104-like"/>
    <property type="match status" value="1"/>
</dbReference>
<dbReference type="FunFam" id="3.40.50.300:FF:000025">
    <property type="entry name" value="ATP-dependent Clp protease subunit"/>
    <property type="match status" value="1"/>
</dbReference>
<dbReference type="FunFam" id="3.40.50.300:FF:000010">
    <property type="entry name" value="Chaperone clpB 1, putative"/>
    <property type="match status" value="1"/>
</dbReference>
<dbReference type="Gene3D" id="1.10.8.60">
    <property type="match status" value="2"/>
</dbReference>
<dbReference type="Gene3D" id="1.10.1780.10">
    <property type="entry name" value="Clp, N-terminal domain"/>
    <property type="match status" value="1"/>
</dbReference>
<dbReference type="Gene3D" id="3.40.50.300">
    <property type="entry name" value="P-loop containing nucleotide triphosphate hydrolases"/>
    <property type="match status" value="2"/>
</dbReference>
<dbReference type="Gene3D" id="4.10.860.10">
    <property type="entry name" value="UVR domain"/>
    <property type="match status" value="1"/>
</dbReference>
<dbReference type="InterPro" id="IPR003593">
    <property type="entry name" value="AAA+_ATPase"/>
</dbReference>
<dbReference type="InterPro" id="IPR003959">
    <property type="entry name" value="ATPase_AAA_core"/>
</dbReference>
<dbReference type="InterPro" id="IPR019489">
    <property type="entry name" value="Clp_ATPase_C"/>
</dbReference>
<dbReference type="InterPro" id="IPR036628">
    <property type="entry name" value="Clp_N_dom_sf"/>
</dbReference>
<dbReference type="InterPro" id="IPR004176">
    <property type="entry name" value="Clp_R_dom"/>
</dbReference>
<dbReference type="InterPro" id="IPR001270">
    <property type="entry name" value="ClpA/B"/>
</dbReference>
<dbReference type="InterPro" id="IPR041546">
    <property type="entry name" value="ClpA/ClpB_AAA_lid"/>
</dbReference>
<dbReference type="InterPro" id="IPR050130">
    <property type="entry name" value="ClpA_ClpB"/>
</dbReference>
<dbReference type="InterPro" id="IPR027417">
    <property type="entry name" value="P-loop_NTPase"/>
</dbReference>
<dbReference type="InterPro" id="IPR001943">
    <property type="entry name" value="UVR_dom"/>
</dbReference>
<dbReference type="PANTHER" id="PTHR11638">
    <property type="entry name" value="ATP-DEPENDENT CLP PROTEASE"/>
    <property type="match status" value="1"/>
</dbReference>
<dbReference type="PANTHER" id="PTHR11638:SF18">
    <property type="entry name" value="HEAT SHOCK PROTEIN 104"/>
    <property type="match status" value="1"/>
</dbReference>
<dbReference type="Pfam" id="PF00004">
    <property type="entry name" value="AAA"/>
    <property type="match status" value="1"/>
</dbReference>
<dbReference type="Pfam" id="PF07724">
    <property type="entry name" value="AAA_2"/>
    <property type="match status" value="1"/>
</dbReference>
<dbReference type="Pfam" id="PF17871">
    <property type="entry name" value="AAA_lid_9"/>
    <property type="match status" value="1"/>
</dbReference>
<dbReference type="Pfam" id="PF02861">
    <property type="entry name" value="Clp_N"/>
    <property type="match status" value="2"/>
</dbReference>
<dbReference type="Pfam" id="PF10431">
    <property type="entry name" value="ClpB_D2-small"/>
    <property type="match status" value="1"/>
</dbReference>
<dbReference type="PRINTS" id="PR00300">
    <property type="entry name" value="CLPPROTEASEA"/>
</dbReference>
<dbReference type="SMART" id="SM00382">
    <property type="entry name" value="AAA"/>
    <property type="match status" value="2"/>
</dbReference>
<dbReference type="SMART" id="SM01086">
    <property type="entry name" value="ClpB_D2-small"/>
    <property type="match status" value="1"/>
</dbReference>
<dbReference type="SUPFAM" id="SSF81923">
    <property type="entry name" value="Double Clp-N motif"/>
    <property type="match status" value="1"/>
</dbReference>
<dbReference type="SUPFAM" id="SSF52540">
    <property type="entry name" value="P-loop containing nucleoside triphosphate hydrolases"/>
    <property type="match status" value="2"/>
</dbReference>
<dbReference type="PROSITE" id="PS51903">
    <property type="entry name" value="CLP_R"/>
    <property type="match status" value="1"/>
</dbReference>
<dbReference type="PROSITE" id="PS50151">
    <property type="entry name" value="UVR"/>
    <property type="match status" value="1"/>
</dbReference>
<keyword id="KW-0067">ATP-binding</keyword>
<keyword id="KW-0143">Chaperone</keyword>
<keyword id="KW-0547">Nucleotide-binding</keyword>
<keyword id="KW-1185">Reference proteome</keyword>
<keyword id="KW-0677">Repeat</keyword>
<comment type="similarity">
    <text evidence="5">Belongs to the ClpA/ClpB family. ClpC subfamily.</text>
</comment>